<comment type="subunit">
    <text evidence="1">Component of the mitochondrial ribosome small subunit (28S) which comprises a 12S rRNA and about 30 distinct proteins.</text>
</comment>
<comment type="subcellular location">
    <subcellularLocation>
        <location evidence="1">Mitochondrion</location>
    </subcellularLocation>
</comment>
<comment type="similarity">
    <text evidence="4">Belongs to the universal ribosomal protein uS11 family.</text>
</comment>
<name>RT11_MOUSE</name>
<proteinExistence type="evidence at protein level"/>
<organism>
    <name type="scientific">Mus musculus</name>
    <name type="common">Mouse</name>
    <dbReference type="NCBI Taxonomy" id="10090"/>
    <lineage>
        <taxon>Eukaryota</taxon>
        <taxon>Metazoa</taxon>
        <taxon>Chordata</taxon>
        <taxon>Craniata</taxon>
        <taxon>Vertebrata</taxon>
        <taxon>Euteleostomi</taxon>
        <taxon>Mammalia</taxon>
        <taxon>Eutheria</taxon>
        <taxon>Euarchontoglires</taxon>
        <taxon>Glires</taxon>
        <taxon>Rodentia</taxon>
        <taxon>Myomorpha</taxon>
        <taxon>Muroidea</taxon>
        <taxon>Muridae</taxon>
        <taxon>Murinae</taxon>
        <taxon>Mus</taxon>
        <taxon>Mus</taxon>
    </lineage>
</organism>
<feature type="transit peptide" description="Mitochondrion" evidence="2">
    <location>
        <begin position="1"/>
        <end status="unknown"/>
    </location>
</feature>
<feature type="chain" id="PRO_0000030603" description="Small ribosomal subunit protein uS11m">
    <location>
        <begin status="unknown"/>
        <end position="191"/>
    </location>
</feature>
<feature type="region of interest" description="Disordered" evidence="3">
    <location>
        <begin position="37"/>
        <end position="62"/>
    </location>
</feature>
<feature type="compositionally biased region" description="Basic and acidic residues" evidence="3">
    <location>
        <begin position="38"/>
        <end position="53"/>
    </location>
</feature>
<feature type="sequence conflict" description="In Ref. 1; BAB22503." evidence="4" ref="1">
    <original>L</original>
    <variation>R</variation>
    <location>
        <position position="13"/>
    </location>
</feature>
<feature type="sequence conflict" description="In Ref. 1; BAB22503." evidence="4" ref="1">
    <original>A</original>
    <variation>T</variation>
    <location>
        <position position="16"/>
    </location>
</feature>
<feature type="sequence conflict" description="In Ref. 3." evidence="4" ref="3">
    <original>GHGMTRFVGIA</original>
    <variation>WTWNDQVCGHC</variation>
    <location>
        <begin position="17"/>
        <end position="27"/>
    </location>
</feature>
<gene>
    <name type="primary">Mrps11</name>
</gene>
<evidence type="ECO:0000250" key="1">
    <source>
        <dbReference type="UniProtKB" id="P82911"/>
    </source>
</evidence>
<evidence type="ECO:0000255" key="2"/>
<evidence type="ECO:0000256" key="3">
    <source>
        <dbReference type="SAM" id="MobiDB-lite"/>
    </source>
</evidence>
<evidence type="ECO:0000305" key="4"/>
<sequence length="191" mass="20208">MQVLRNSGSWLLLSWAGHGMTRFVGIAPAKNIHTGAPRLEDSAARQNTEREAAPSRFSLYPPVPGQESSLQWAGMKFEDVPIAHIKATYNNTQIQVVSATNASLARASCGTEGFRNAKKGTGIAAQTAGIAAAAKATGKGVTHIRVVVKGMGPGRWSAIKGLTMGGLEVISITDNTPVPHNGCRPRKARRL</sequence>
<dbReference type="EMBL" id="AK002993">
    <property type="protein sequence ID" value="BAB22503.1"/>
    <property type="molecule type" value="mRNA"/>
</dbReference>
<dbReference type="EMBL" id="BC005701">
    <property type="protein sequence ID" value="AAH05701.1"/>
    <property type="molecule type" value="mRNA"/>
</dbReference>
<dbReference type="EMBL" id="BC028279">
    <property type="protein sequence ID" value="AAH28279.1"/>
    <property type="molecule type" value="mRNA"/>
</dbReference>
<dbReference type="EMBL" id="AB049945">
    <property type="protein sequence ID" value="BAB40998.1"/>
    <property type="molecule type" value="mRNA"/>
</dbReference>
<dbReference type="CCDS" id="CCDS21374.1"/>
<dbReference type="PDB" id="7PNT">
    <property type="method" value="EM"/>
    <property type="resolution" value="3.19 A"/>
    <property type="chains" value="I=1-191"/>
</dbReference>
<dbReference type="PDB" id="7PNU">
    <property type="method" value="EM"/>
    <property type="resolution" value="3.06 A"/>
    <property type="chains" value="I=1-191"/>
</dbReference>
<dbReference type="PDB" id="7PNV">
    <property type="method" value="EM"/>
    <property type="resolution" value="3.06 A"/>
    <property type="chains" value="I=1-191"/>
</dbReference>
<dbReference type="PDB" id="7PNW">
    <property type="method" value="EM"/>
    <property type="resolution" value="3.09 A"/>
    <property type="chains" value="I=1-191"/>
</dbReference>
<dbReference type="PDBsum" id="7PNT"/>
<dbReference type="PDBsum" id="7PNU"/>
<dbReference type="PDBsum" id="7PNV"/>
<dbReference type="PDBsum" id="7PNW"/>
<dbReference type="EMDB" id="EMD-13551"/>
<dbReference type="EMDB" id="EMD-13552"/>
<dbReference type="EMDB" id="EMD-13553"/>
<dbReference type="EMDB" id="EMD-13554"/>
<dbReference type="SMR" id="Q9DCA2"/>
<dbReference type="ComplexPortal" id="CPX-5301">
    <property type="entry name" value="28S mitochondrial small ribosomal subunit"/>
</dbReference>
<dbReference type="FunCoup" id="Q9DCA2">
    <property type="interactions" value="1103"/>
</dbReference>
<dbReference type="STRING" id="10090.ENSMUSP00000032840"/>
<dbReference type="GlyGen" id="Q9DCA2">
    <property type="glycosylation" value="1 site, 1 O-linked glycan (1 site)"/>
</dbReference>
<dbReference type="iPTMnet" id="Q9DCA2"/>
<dbReference type="PhosphoSitePlus" id="Q9DCA2"/>
<dbReference type="SwissPalm" id="Q9DCA2"/>
<dbReference type="jPOST" id="Q9DCA2"/>
<dbReference type="PaxDb" id="10090-ENSMUSP00000032840"/>
<dbReference type="ProteomicsDB" id="260939"/>
<dbReference type="Pumba" id="Q9DCA2"/>
<dbReference type="AGR" id="MGI:1915244"/>
<dbReference type="MGI" id="MGI:1915244">
    <property type="gene designation" value="Mrps11"/>
</dbReference>
<dbReference type="eggNOG" id="KOG0408">
    <property type="taxonomic scope" value="Eukaryota"/>
</dbReference>
<dbReference type="InParanoid" id="Q9DCA2"/>
<dbReference type="PhylomeDB" id="Q9DCA2"/>
<dbReference type="Reactome" id="R-MMU-5389840">
    <property type="pathway name" value="Mitochondrial translation elongation"/>
</dbReference>
<dbReference type="Reactome" id="R-MMU-5419276">
    <property type="pathway name" value="Mitochondrial translation termination"/>
</dbReference>
<dbReference type="ChiTaRS" id="Mrps11">
    <property type="organism name" value="mouse"/>
</dbReference>
<dbReference type="PRO" id="PR:Q9DCA2"/>
<dbReference type="Proteomes" id="UP000000589">
    <property type="component" value="Unplaced"/>
</dbReference>
<dbReference type="RNAct" id="Q9DCA2">
    <property type="molecule type" value="protein"/>
</dbReference>
<dbReference type="GO" id="GO:0005743">
    <property type="term" value="C:mitochondrial inner membrane"/>
    <property type="evidence" value="ECO:0000303"/>
    <property type="project" value="ComplexPortal"/>
</dbReference>
<dbReference type="GO" id="GO:0005763">
    <property type="term" value="C:mitochondrial small ribosomal subunit"/>
    <property type="evidence" value="ECO:0000250"/>
    <property type="project" value="UniProtKB"/>
</dbReference>
<dbReference type="GO" id="GO:0005739">
    <property type="term" value="C:mitochondrion"/>
    <property type="evidence" value="ECO:0007005"/>
    <property type="project" value="MGI"/>
</dbReference>
<dbReference type="GO" id="GO:0003735">
    <property type="term" value="F:structural constituent of ribosome"/>
    <property type="evidence" value="ECO:0000250"/>
    <property type="project" value="UniProtKB"/>
</dbReference>
<dbReference type="GO" id="GO:0032543">
    <property type="term" value="P:mitochondrial translation"/>
    <property type="evidence" value="ECO:0000250"/>
    <property type="project" value="UniProtKB"/>
</dbReference>
<dbReference type="FunFam" id="3.30.420.80:FF:000006">
    <property type="entry name" value="28S ribosomal protein S11, mitochondrial"/>
    <property type="match status" value="1"/>
</dbReference>
<dbReference type="Gene3D" id="3.30.420.80">
    <property type="entry name" value="Ribosomal protein S11"/>
    <property type="match status" value="1"/>
</dbReference>
<dbReference type="HAMAP" id="MF_01310">
    <property type="entry name" value="Ribosomal_uS11"/>
    <property type="match status" value="1"/>
</dbReference>
<dbReference type="InterPro" id="IPR001971">
    <property type="entry name" value="Ribosomal_uS11"/>
</dbReference>
<dbReference type="InterPro" id="IPR018102">
    <property type="entry name" value="Ribosomal_uS11_CS"/>
</dbReference>
<dbReference type="InterPro" id="IPR036967">
    <property type="entry name" value="Ribosomal_uS11_sf"/>
</dbReference>
<dbReference type="NCBIfam" id="NF003698">
    <property type="entry name" value="PRK05309.1"/>
    <property type="match status" value="1"/>
</dbReference>
<dbReference type="PANTHER" id="PTHR11759">
    <property type="entry name" value="40S RIBOSOMAL PROTEIN S14/30S RIBOSOMAL PROTEIN S11"/>
    <property type="match status" value="1"/>
</dbReference>
<dbReference type="Pfam" id="PF00411">
    <property type="entry name" value="Ribosomal_S11"/>
    <property type="match status" value="1"/>
</dbReference>
<dbReference type="SUPFAM" id="SSF53137">
    <property type="entry name" value="Translational machinery components"/>
    <property type="match status" value="1"/>
</dbReference>
<dbReference type="PROSITE" id="PS00054">
    <property type="entry name" value="RIBOSOMAL_S11"/>
    <property type="match status" value="1"/>
</dbReference>
<reference key="1">
    <citation type="journal article" date="2005" name="Science">
        <title>The transcriptional landscape of the mammalian genome.</title>
        <authorList>
            <person name="Carninci P."/>
            <person name="Kasukawa T."/>
            <person name="Katayama S."/>
            <person name="Gough J."/>
            <person name="Frith M.C."/>
            <person name="Maeda N."/>
            <person name="Oyama R."/>
            <person name="Ravasi T."/>
            <person name="Lenhard B."/>
            <person name="Wells C."/>
            <person name="Kodzius R."/>
            <person name="Shimokawa K."/>
            <person name="Bajic V.B."/>
            <person name="Brenner S.E."/>
            <person name="Batalov S."/>
            <person name="Forrest A.R."/>
            <person name="Zavolan M."/>
            <person name="Davis M.J."/>
            <person name="Wilming L.G."/>
            <person name="Aidinis V."/>
            <person name="Allen J.E."/>
            <person name="Ambesi-Impiombato A."/>
            <person name="Apweiler R."/>
            <person name="Aturaliya R.N."/>
            <person name="Bailey T.L."/>
            <person name="Bansal M."/>
            <person name="Baxter L."/>
            <person name="Beisel K.W."/>
            <person name="Bersano T."/>
            <person name="Bono H."/>
            <person name="Chalk A.M."/>
            <person name="Chiu K.P."/>
            <person name="Choudhary V."/>
            <person name="Christoffels A."/>
            <person name="Clutterbuck D.R."/>
            <person name="Crowe M.L."/>
            <person name="Dalla E."/>
            <person name="Dalrymple B.P."/>
            <person name="de Bono B."/>
            <person name="Della Gatta G."/>
            <person name="di Bernardo D."/>
            <person name="Down T."/>
            <person name="Engstrom P."/>
            <person name="Fagiolini M."/>
            <person name="Faulkner G."/>
            <person name="Fletcher C.F."/>
            <person name="Fukushima T."/>
            <person name="Furuno M."/>
            <person name="Futaki S."/>
            <person name="Gariboldi M."/>
            <person name="Georgii-Hemming P."/>
            <person name="Gingeras T.R."/>
            <person name="Gojobori T."/>
            <person name="Green R.E."/>
            <person name="Gustincich S."/>
            <person name="Harbers M."/>
            <person name="Hayashi Y."/>
            <person name="Hensch T.K."/>
            <person name="Hirokawa N."/>
            <person name="Hill D."/>
            <person name="Huminiecki L."/>
            <person name="Iacono M."/>
            <person name="Ikeo K."/>
            <person name="Iwama A."/>
            <person name="Ishikawa T."/>
            <person name="Jakt M."/>
            <person name="Kanapin A."/>
            <person name="Katoh M."/>
            <person name="Kawasawa Y."/>
            <person name="Kelso J."/>
            <person name="Kitamura H."/>
            <person name="Kitano H."/>
            <person name="Kollias G."/>
            <person name="Krishnan S.P."/>
            <person name="Kruger A."/>
            <person name="Kummerfeld S.K."/>
            <person name="Kurochkin I.V."/>
            <person name="Lareau L.F."/>
            <person name="Lazarevic D."/>
            <person name="Lipovich L."/>
            <person name="Liu J."/>
            <person name="Liuni S."/>
            <person name="McWilliam S."/>
            <person name="Madan Babu M."/>
            <person name="Madera M."/>
            <person name="Marchionni L."/>
            <person name="Matsuda H."/>
            <person name="Matsuzawa S."/>
            <person name="Miki H."/>
            <person name="Mignone F."/>
            <person name="Miyake S."/>
            <person name="Morris K."/>
            <person name="Mottagui-Tabar S."/>
            <person name="Mulder N."/>
            <person name="Nakano N."/>
            <person name="Nakauchi H."/>
            <person name="Ng P."/>
            <person name="Nilsson R."/>
            <person name="Nishiguchi S."/>
            <person name="Nishikawa S."/>
            <person name="Nori F."/>
            <person name="Ohara O."/>
            <person name="Okazaki Y."/>
            <person name="Orlando V."/>
            <person name="Pang K.C."/>
            <person name="Pavan W.J."/>
            <person name="Pavesi G."/>
            <person name="Pesole G."/>
            <person name="Petrovsky N."/>
            <person name="Piazza S."/>
            <person name="Reed J."/>
            <person name="Reid J.F."/>
            <person name="Ring B.Z."/>
            <person name="Ringwald M."/>
            <person name="Rost B."/>
            <person name="Ruan Y."/>
            <person name="Salzberg S.L."/>
            <person name="Sandelin A."/>
            <person name="Schneider C."/>
            <person name="Schoenbach C."/>
            <person name="Sekiguchi K."/>
            <person name="Semple C.A."/>
            <person name="Seno S."/>
            <person name="Sessa L."/>
            <person name="Sheng Y."/>
            <person name="Shibata Y."/>
            <person name="Shimada H."/>
            <person name="Shimada K."/>
            <person name="Silva D."/>
            <person name="Sinclair B."/>
            <person name="Sperling S."/>
            <person name="Stupka E."/>
            <person name="Sugiura K."/>
            <person name="Sultana R."/>
            <person name="Takenaka Y."/>
            <person name="Taki K."/>
            <person name="Tammoja K."/>
            <person name="Tan S.L."/>
            <person name="Tang S."/>
            <person name="Taylor M.S."/>
            <person name="Tegner J."/>
            <person name="Teichmann S.A."/>
            <person name="Ueda H.R."/>
            <person name="van Nimwegen E."/>
            <person name="Verardo R."/>
            <person name="Wei C.L."/>
            <person name="Yagi K."/>
            <person name="Yamanishi H."/>
            <person name="Zabarovsky E."/>
            <person name="Zhu S."/>
            <person name="Zimmer A."/>
            <person name="Hide W."/>
            <person name="Bult C."/>
            <person name="Grimmond S.M."/>
            <person name="Teasdale R.D."/>
            <person name="Liu E.T."/>
            <person name="Brusic V."/>
            <person name="Quackenbush J."/>
            <person name="Wahlestedt C."/>
            <person name="Mattick J.S."/>
            <person name="Hume D.A."/>
            <person name="Kai C."/>
            <person name="Sasaki D."/>
            <person name="Tomaru Y."/>
            <person name="Fukuda S."/>
            <person name="Kanamori-Katayama M."/>
            <person name="Suzuki M."/>
            <person name="Aoki J."/>
            <person name="Arakawa T."/>
            <person name="Iida J."/>
            <person name="Imamura K."/>
            <person name="Itoh M."/>
            <person name="Kato T."/>
            <person name="Kawaji H."/>
            <person name="Kawagashira N."/>
            <person name="Kawashima T."/>
            <person name="Kojima M."/>
            <person name="Kondo S."/>
            <person name="Konno H."/>
            <person name="Nakano K."/>
            <person name="Ninomiya N."/>
            <person name="Nishio T."/>
            <person name="Okada M."/>
            <person name="Plessy C."/>
            <person name="Shibata K."/>
            <person name="Shiraki T."/>
            <person name="Suzuki S."/>
            <person name="Tagami M."/>
            <person name="Waki K."/>
            <person name="Watahiki A."/>
            <person name="Okamura-Oho Y."/>
            <person name="Suzuki H."/>
            <person name="Kawai J."/>
            <person name="Hayashizaki Y."/>
        </authorList>
    </citation>
    <scope>NUCLEOTIDE SEQUENCE [LARGE SCALE MRNA]</scope>
    <source>
        <strain>C57BL/6J</strain>
        <tissue>Brain</tissue>
    </source>
</reference>
<reference key="2">
    <citation type="journal article" date="2004" name="Genome Res.">
        <title>The status, quality, and expansion of the NIH full-length cDNA project: the Mammalian Gene Collection (MGC).</title>
        <authorList>
            <consortium name="The MGC Project Team"/>
        </authorList>
    </citation>
    <scope>NUCLEOTIDE SEQUENCE [LARGE SCALE MRNA]</scope>
    <source>
        <strain>FVB/N</strain>
    </source>
</reference>
<reference key="3">
    <citation type="journal article" date="2001" name="J. Biol. Chem.">
        <title>Proteomic analysis of the mammalian mitochondrial ribosome. Identification of protein components in the 28S small subunit.</title>
        <authorList>
            <person name="Suzuki T."/>
            <person name="Terasaki M."/>
            <person name="Takemoto-Hori C."/>
            <person name="Hanada T."/>
            <person name="Ueda T."/>
            <person name="Wada A."/>
            <person name="Watanabe K."/>
        </authorList>
    </citation>
    <scope>NUCLEOTIDE SEQUENCE [MRNA] OF 17-191</scope>
</reference>
<reference key="4">
    <citation type="journal article" date="2010" name="Cell">
        <title>A tissue-specific atlas of mouse protein phosphorylation and expression.</title>
        <authorList>
            <person name="Huttlin E.L."/>
            <person name="Jedrychowski M.P."/>
            <person name="Elias J.E."/>
            <person name="Goswami T."/>
            <person name="Rad R."/>
            <person name="Beausoleil S.A."/>
            <person name="Villen J."/>
            <person name="Haas W."/>
            <person name="Sowa M.E."/>
            <person name="Gygi S.P."/>
        </authorList>
    </citation>
    <scope>IDENTIFICATION BY MASS SPECTROMETRY [LARGE SCALE ANALYSIS]</scope>
    <source>
        <tissue>Brain</tissue>
        <tissue>Brown adipose tissue</tissue>
        <tissue>Heart</tissue>
        <tissue>Kidney</tissue>
        <tissue>Liver</tissue>
        <tissue>Testis</tissue>
    </source>
</reference>
<protein>
    <recommendedName>
        <fullName evidence="4">Small ribosomal subunit protein uS11m</fullName>
    </recommendedName>
    <alternativeName>
        <fullName>28S ribosomal protein S11, mitochondrial</fullName>
        <shortName>MRP-S11</shortName>
        <shortName>S11mt</shortName>
    </alternativeName>
</protein>
<keyword id="KW-0002">3D-structure</keyword>
<keyword id="KW-0496">Mitochondrion</keyword>
<keyword id="KW-1185">Reference proteome</keyword>
<keyword id="KW-0687">Ribonucleoprotein</keyword>
<keyword id="KW-0689">Ribosomal protein</keyword>
<keyword id="KW-0809">Transit peptide</keyword>
<accession>Q9DCA2</accession>
<accession>Q99JT7</accession>
<accession>Q99N86</accession>